<dbReference type="EC" id="3.1.13.1"/>
<dbReference type="EMBL" id="CU329672">
    <property type="protein sequence ID" value="CAB51565.2"/>
    <property type="molecule type" value="Genomic_DNA"/>
</dbReference>
<dbReference type="RefSeq" id="NP_588129.2">
    <property type="nucleotide sequence ID" value="NM_001023119.2"/>
</dbReference>
<dbReference type="SMR" id="Q1MTN7"/>
<dbReference type="BioGRID" id="275379">
    <property type="interactions" value="3"/>
</dbReference>
<dbReference type="FunCoup" id="Q1MTN7">
    <property type="interactions" value="3"/>
</dbReference>
<dbReference type="STRING" id="284812.Q1MTN7"/>
<dbReference type="iPTMnet" id="Q1MTN7"/>
<dbReference type="PaxDb" id="4896-SPCC1322.01.1"/>
<dbReference type="EnsemblFungi" id="SPCC1322.01.1">
    <property type="protein sequence ID" value="SPCC1322.01.1:pep"/>
    <property type="gene ID" value="SPCC1322.01"/>
</dbReference>
<dbReference type="GeneID" id="2538798"/>
<dbReference type="KEGG" id="spo:2538798"/>
<dbReference type="PomBase" id="SPCC1322.01">
    <property type="gene designation" value="rpm1"/>
</dbReference>
<dbReference type="VEuPathDB" id="FungiDB:SPCC1322.01"/>
<dbReference type="eggNOG" id="KOG2102">
    <property type="taxonomic scope" value="Eukaryota"/>
</dbReference>
<dbReference type="HOGENOM" id="CLU_308393_0_0_1"/>
<dbReference type="InParanoid" id="Q1MTN7"/>
<dbReference type="OMA" id="ISECMIL"/>
<dbReference type="PhylomeDB" id="Q1MTN7"/>
<dbReference type="PRO" id="PR:Q1MTN7"/>
<dbReference type="Proteomes" id="UP000002485">
    <property type="component" value="Chromosome III"/>
</dbReference>
<dbReference type="GO" id="GO:0045025">
    <property type="term" value="C:mitochondrial degradosome"/>
    <property type="evidence" value="ECO:0000266"/>
    <property type="project" value="PomBase"/>
</dbReference>
<dbReference type="GO" id="GO:0005759">
    <property type="term" value="C:mitochondrial matrix"/>
    <property type="evidence" value="ECO:0000266"/>
    <property type="project" value="PomBase"/>
</dbReference>
<dbReference type="GO" id="GO:0005739">
    <property type="term" value="C:mitochondrion"/>
    <property type="evidence" value="ECO:0000314"/>
    <property type="project" value="PomBase"/>
</dbReference>
<dbReference type="GO" id="GO:0008859">
    <property type="term" value="F:exoribonuclease II activity"/>
    <property type="evidence" value="ECO:0000266"/>
    <property type="project" value="PomBase"/>
</dbReference>
<dbReference type="GO" id="GO:0003723">
    <property type="term" value="F:RNA binding"/>
    <property type="evidence" value="ECO:0000250"/>
    <property type="project" value="PomBase"/>
</dbReference>
<dbReference type="GO" id="GO:0000965">
    <property type="term" value="P:mitochondrial RNA 3'-end processing"/>
    <property type="evidence" value="ECO:0000315"/>
    <property type="project" value="PomBase"/>
</dbReference>
<dbReference type="InterPro" id="IPR012340">
    <property type="entry name" value="NA-bd_OB-fold"/>
</dbReference>
<dbReference type="InterPro" id="IPR001900">
    <property type="entry name" value="RNase_II/R"/>
</dbReference>
<dbReference type="InterPro" id="IPR050180">
    <property type="entry name" value="RNR_Ribonuclease"/>
</dbReference>
<dbReference type="PANTHER" id="PTHR23355:SF66">
    <property type="entry name" value="DIS3-LIKE EXONUCLEASE 2-RELATED"/>
    <property type="match status" value="1"/>
</dbReference>
<dbReference type="PANTHER" id="PTHR23355">
    <property type="entry name" value="RIBONUCLEASE"/>
    <property type="match status" value="1"/>
</dbReference>
<dbReference type="Pfam" id="PF00773">
    <property type="entry name" value="RNB"/>
    <property type="match status" value="1"/>
</dbReference>
<dbReference type="SMART" id="SM00955">
    <property type="entry name" value="RNB"/>
    <property type="match status" value="1"/>
</dbReference>
<dbReference type="SUPFAM" id="SSF50249">
    <property type="entry name" value="Nucleic acid-binding proteins"/>
    <property type="match status" value="1"/>
</dbReference>
<feature type="transit peptide" description="Mitochondrion" evidence="1">
    <location>
        <begin position="1"/>
        <end position="54"/>
    </location>
</feature>
<feature type="chain" id="PRO_0000353825" description="Exoribonuclease II, mitochondrial">
    <location>
        <begin position="55"/>
        <end position="957"/>
    </location>
</feature>
<feature type="domain" description="RNB" evidence="1">
    <location>
        <begin position="503"/>
        <end position="843"/>
    </location>
</feature>
<comment type="function">
    <text evidence="3">Required for intron-independent turnover and processing of mitochondrial RNA. Participates in 3'-mtRNA processing where it hydrolyzes single-stranded RNA or partially double-stranded RNA with 3'-single-stranded tails.</text>
</comment>
<comment type="catalytic activity">
    <reaction>
        <text>Exonucleolytic cleavage in the 3'- to 5'-direction to yield nucleoside 5'-phosphates.</text>
        <dbReference type="EC" id="3.1.13.1"/>
    </reaction>
</comment>
<comment type="subcellular location">
    <subcellularLocation>
        <location evidence="2">Mitochondrion</location>
    </subcellularLocation>
</comment>
<comment type="induction">
    <text evidence="3">Up-regulated in cells metabolizing nonfermentable carbon sources.</text>
</comment>
<comment type="similarity">
    <text evidence="4">Belongs to the RNR ribonuclease family.</text>
</comment>
<gene>
    <name type="primary">rpm1</name>
    <name type="synonym">par1</name>
    <name type="ORF">SPCC1322.01</name>
</gene>
<name>RPM1_SCHPO</name>
<proteinExistence type="evidence at transcript level"/>
<accession>Q1MTN7</accession>
<protein>
    <recommendedName>
        <fullName>Exoribonuclease II, mitochondrial</fullName>
        <shortName>RNase II</shortName>
        <shortName>Ribonuclease II</shortName>
        <ecNumber>3.1.13.1</ecNumber>
    </recommendedName>
    <alternativeName>
        <fullName>Processome-associated RNase</fullName>
    </alternativeName>
</protein>
<reference key="1">
    <citation type="journal article" date="2002" name="Nature">
        <title>The genome sequence of Schizosaccharomyces pombe.</title>
        <authorList>
            <person name="Wood V."/>
            <person name="Gwilliam R."/>
            <person name="Rajandream M.A."/>
            <person name="Lyne M.H."/>
            <person name="Lyne R."/>
            <person name="Stewart A."/>
            <person name="Sgouros J.G."/>
            <person name="Peat N."/>
            <person name="Hayles J."/>
            <person name="Baker S.G."/>
            <person name="Basham D."/>
            <person name="Bowman S."/>
            <person name="Brooks K."/>
            <person name="Brown D."/>
            <person name="Brown S."/>
            <person name="Chillingworth T."/>
            <person name="Churcher C.M."/>
            <person name="Collins M."/>
            <person name="Connor R."/>
            <person name="Cronin A."/>
            <person name="Davis P."/>
            <person name="Feltwell T."/>
            <person name="Fraser A."/>
            <person name="Gentles S."/>
            <person name="Goble A."/>
            <person name="Hamlin N."/>
            <person name="Harris D.E."/>
            <person name="Hidalgo J."/>
            <person name="Hodgson G."/>
            <person name="Holroyd S."/>
            <person name="Hornsby T."/>
            <person name="Howarth S."/>
            <person name="Huckle E.J."/>
            <person name="Hunt S."/>
            <person name="Jagels K."/>
            <person name="James K.D."/>
            <person name="Jones L."/>
            <person name="Jones M."/>
            <person name="Leather S."/>
            <person name="McDonald S."/>
            <person name="McLean J."/>
            <person name="Mooney P."/>
            <person name="Moule S."/>
            <person name="Mungall K.L."/>
            <person name="Murphy L.D."/>
            <person name="Niblett D."/>
            <person name="Odell C."/>
            <person name="Oliver K."/>
            <person name="O'Neil S."/>
            <person name="Pearson D."/>
            <person name="Quail M.A."/>
            <person name="Rabbinowitsch E."/>
            <person name="Rutherford K.M."/>
            <person name="Rutter S."/>
            <person name="Saunders D."/>
            <person name="Seeger K."/>
            <person name="Sharp S."/>
            <person name="Skelton J."/>
            <person name="Simmonds M.N."/>
            <person name="Squares R."/>
            <person name="Squares S."/>
            <person name="Stevens K."/>
            <person name="Taylor K."/>
            <person name="Taylor R.G."/>
            <person name="Tivey A."/>
            <person name="Walsh S.V."/>
            <person name="Warren T."/>
            <person name="Whitehead S."/>
            <person name="Woodward J.R."/>
            <person name="Volckaert G."/>
            <person name="Aert R."/>
            <person name="Robben J."/>
            <person name="Grymonprez B."/>
            <person name="Weltjens I."/>
            <person name="Vanstreels E."/>
            <person name="Rieger M."/>
            <person name="Schaefer M."/>
            <person name="Mueller-Auer S."/>
            <person name="Gabel C."/>
            <person name="Fuchs M."/>
            <person name="Duesterhoeft A."/>
            <person name="Fritzc C."/>
            <person name="Holzer E."/>
            <person name="Moestl D."/>
            <person name="Hilbert H."/>
            <person name="Borzym K."/>
            <person name="Langer I."/>
            <person name="Beck A."/>
            <person name="Lehrach H."/>
            <person name="Reinhardt R."/>
            <person name="Pohl T.M."/>
            <person name="Eger P."/>
            <person name="Zimmermann W."/>
            <person name="Wedler H."/>
            <person name="Wambutt R."/>
            <person name="Purnelle B."/>
            <person name="Goffeau A."/>
            <person name="Cadieu E."/>
            <person name="Dreano S."/>
            <person name="Gloux S."/>
            <person name="Lelaure V."/>
            <person name="Mottier S."/>
            <person name="Galibert F."/>
            <person name="Aves S.J."/>
            <person name="Xiang Z."/>
            <person name="Hunt C."/>
            <person name="Moore K."/>
            <person name="Hurst S.M."/>
            <person name="Lucas M."/>
            <person name="Rochet M."/>
            <person name="Gaillardin C."/>
            <person name="Tallada V.A."/>
            <person name="Garzon A."/>
            <person name="Thode G."/>
            <person name="Daga R.R."/>
            <person name="Cruzado L."/>
            <person name="Jimenez J."/>
            <person name="Sanchez M."/>
            <person name="del Rey F."/>
            <person name="Benito J."/>
            <person name="Dominguez A."/>
            <person name="Revuelta J.L."/>
            <person name="Moreno S."/>
            <person name="Armstrong J."/>
            <person name="Forsburg S.L."/>
            <person name="Cerutti L."/>
            <person name="Lowe T."/>
            <person name="McCombie W.R."/>
            <person name="Paulsen I."/>
            <person name="Potashkin J."/>
            <person name="Shpakovski G.V."/>
            <person name="Ussery D."/>
            <person name="Barrell B.G."/>
            <person name="Nurse P."/>
        </authorList>
    </citation>
    <scope>NUCLEOTIDE SEQUENCE [LARGE SCALE GENOMIC DNA]</scope>
    <source>
        <strain>972 / ATCC 24843</strain>
    </source>
</reference>
<reference key="2">
    <citation type="journal article" date="2006" name="Nat. Biotechnol.">
        <title>ORFeome cloning and global analysis of protein localization in the fission yeast Schizosaccharomyces pombe.</title>
        <authorList>
            <person name="Matsuyama A."/>
            <person name="Arai R."/>
            <person name="Yashiroda Y."/>
            <person name="Shirai A."/>
            <person name="Kamata A."/>
            <person name="Sekido S."/>
            <person name="Kobayashi Y."/>
            <person name="Hashimoto A."/>
            <person name="Hamamoto M."/>
            <person name="Hiraoka Y."/>
            <person name="Horinouchi S."/>
            <person name="Yoshida M."/>
        </authorList>
    </citation>
    <scope>SUBCELLULAR LOCATION [LARGE SCALE ANALYSIS]</scope>
</reference>
<reference key="3">
    <citation type="journal article" date="2008" name="J. Mol. Biol.">
        <title>The 3' ends of mature transcripts are generated by a processosome complex in fission yeast mitochondria.</title>
        <authorList>
            <person name="Hoffmann B."/>
            <person name="Nickel J."/>
            <person name="Speer F."/>
            <person name="Schafer B."/>
        </authorList>
    </citation>
    <scope>FUNCTION</scope>
    <scope>INDUCTION</scope>
</reference>
<organism>
    <name type="scientific">Schizosaccharomyces pombe (strain 972 / ATCC 24843)</name>
    <name type="common">Fission yeast</name>
    <dbReference type="NCBI Taxonomy" id="284812"/>
    <lineage>
        <taxon>Eukaryota</taxon>
        <taxon>Fungi</taxon>
        <taxon>Dikarya</taxon>
        <taxon>Ascomycota</taxon>
        <taxon>Taphrinomycotina</taxon>
        <taxon>Schizosaccharomycetes</taxon>
        <taxon>Schizosaccharomycetales</taxon>
        <taxon>Schizosaccharomycetaceae</taxon>
        <taxon>Schizosaccharomyces</taxon>
    </lineage>
</organism>
<evidence type="ECO:0000255" key="1"/>
<evidence type="ECO:0000269" key="2">
    <source>
    </source>
</evidence>
<evidence type="ECO:0000269" key="3">
    <source>
    </source>
</evidence>
<evidence type="ECO:0000305" key="4"/>
<sequence>MNYRQLFLLQNVNLESNYLLKRVCLSLKLSPCKLTRKFHHACPSSSKVLKYFRITGCLINFGKQPANDHHLWGHCGARLKHTQSDLIDRFKNANLKSVNEENLKKFFSELENHGNIRQWLKDKFEKDKRAAVCPTTTKSEEEKLENDFEYSFDLEDFSSENFRQYDRGDLLVFYRGSEGIELAACTGTNVWNYSNVLTSINENGTIKEFRTSRVLLRCPNVFKKLKEVQQPLSDVSVPSDVLPFTIKLLKKISQRAQDLSRSHRNEFLRILTEFNIPNKLDNSASFSDLLKFVYKTSKPSPYAKISLLHFLLTESKHFLISDHIFSEIQKVYFLPSSQNDSFDDVVACLRQKSTPYLSFIKKARHLIQVSRDKYKLPISTEEIKPVVYSQVTWTEFEKKLLRYLVQEMIAKSIQSLPNTHLCQVYKEVGLQTHERGLTSDQFAKFLTDIGVWASWQPPRLFQQEYSIAGLGTNPQLDAVYERECNHFKKFVKNELKDSLESQRVDLRHLKAFAFDSSSTKEIDDAISVEELGMSNSWLHIHVANPTSTVDIRSPLGTFAERNFQTIYHPNKIVYMLPLNITQKYWSLDSSSTAQRALTFSAKISKNGDILDYKVRPSFISSVIKYTPQQLDKALHSNRSIAKDIVSGPVDEETKGVSNDHMKDILRIYELSKQACFSRLQKFAFVIAQPTPTVELLPNNVPYNLGDLNHPVYWSSFPTISLNVSEGYSLAESVISECMILAGRVSSLFFQEHKLPGIFRGQPYPIMDGVRRKAFETLLSNRSSWGLVETKYSLSVMPLFESSHLASTPVSHFSLGLKDGYIQSTSPLRRFTDFFTHHQIQSVLLKTPKNTIPDGILRGKLNLYNQKEKSIKTIGRYINRFWALKYIERLPKVQKNIYHGYLMVSELSTPQVMLEELGVKAHIDILPDEAFRLANTRQAFTIKDVFPESNILLVALAT</sequence>
<keyword id="KW-0269">Exonuclease</keyword>
<keyword id="KW-0378">Hydrolase</keyword>
<keyword id="KW-0496">Mitochondrion</keyword>
<keyword id="KW-0540">Nuclease</keyword>
<keyword id="KW-1185">Reference proteome</keyword>
<keyword id="KW-0694">RNA-binding</keyword>
<keyword id="KW-0809">Transit peptide</keyword>